<sequence length="425" mass="47440">MATSLGSNTYNRQNWEDSDFPILCQTCLGENPYIRMTKEKFGKECKICARPFTVFRWCPGVRMRFKKTEVCQTCSKMKNVCQTCLLDLEYGLPIQVRDTGLSVKDEVPRSDVNKEYYTQNMEREIANSDGTRPVGLLGKAPSSSDMLLKLARTTPYYKRNRPHICSFWVKGECKRGEECPYRHEKPTDPDDPLADQNIKDRYYGINDPVANKLLMRASTMPRLDVPDDKSITTLYIGGLGENVTDSELRNHFYQFGEIRTITIVQRQQCAFIQFATRQAAETAAEKSFNKLIINGRRLNVKWGRSQAARGKGEKDGVTESGIRLEPVPGLPGALPPPPVSDEDASTNYFNLAPTPSPAVMNLGLPPPPGVTMPPPPGFGPPMFHTMDPMAPPVPPPMALRPPGQVHYPSQDPQRMGAHASRHGGP</sequence>
<feature type="chain" id="PRO_0000250552" description="Pre-mRNA-splicing factor RBM22">
    <location>
        <begin position="1"/>
        <end position="425"/>
    </location>
</feature>
<feature type="domain" description="RRM" evidence="3">
    <location>
        <begin position="232"/>
        <end position="305"/>
    </location>
</feature>
<feature type="zinc finger region" description="C3H1-type" evidence="4">
    <location>
        <begin position="159"/>
        <end position="186"/>
    </location>
</feature>
<feature type="region of interest" description="Disordered" evidence="5">
    <location>
        <begin position="304"/>
        <end position="331"/>
    </location>
</feature>
<feature type="region of interest" description="Disordered" evidence="5">
    <location>
        <begin position="384"/>
        <end position="425"/>
    </location>
</feature>
<feature type="compositionally biased region" description="Pro residues" evidence="5">
    <location>
        <begin position="389"/>
        <end position="399"/>
    </location>
</feature>
<keyword id="KW-0963">Cytoplasm</keyword>
<keyword id="KW-0217">Developmental protein</keyword>
<keyword id="KW-0479">Metal-binding</keyword>
<keyword id="KW-0507">mRNA processing</keyword>
<keyword id="KW-0508">mRNA splicing</keyword>
<keyword id="KW-0539">Nucleus</keyword>
<keyword id="KW-1185">Reference proteome</keyword>
<keyword id="KW-0694">RNA-binding</keyword>
<keyword id="KW-0747">Spliceosome</keyword>
<keyword id="KW-0862">Zinc</keyword>
<keyword id="KW-0863">Zinc-finger</keyword>
<reference key="1">
    <citation type="journal article" date="2004" name="Proc. Natl. Acad. Sci. U.S.A.">
        <title>Identification of 315 genes essential for early zebrafish development.</title>
        <authorList>
            <person name="Amsterdam A."/>
            <person name="Nissen R.M."/>
            <person name="Sun Z."/>
            <person name="Swindell E.C."/>
            <person name="Farrington S."/>
            <person name="Hopkins N."/>
        </authorList>
    </citation>
    <scope>NUCLEOTIDE SEQUENCE [LARGE SCALE MRNA]</scope>
    <source>
        <tissue>Embryo</tissue>
    </source>
</reference>
<reference key="2">
    <citation type="submission" date="2004-01" db="EMBL/GenBank/DDBJ databases">
        <authorList>
            <consortium name="NIH - Zebrafish Gene Collection (ZGC) project"/>
        </authorList>
    </citation>
    <scope>NUCLEOTIDE SEQUENCE [LARGE SCALE MRNA]</scope>
</reference>
<reference key="3">
    <citation type="journal article" date="2009" name="Genet. Mol. Res.">
        <title>RNA-binding motif protein RBM22 is required for normal development of zebrafish embryos.</title>
        <authorList>
            <person name="He F."/>
            <person name="Wang C.T."/>
            <person name="Gou L.T."/>
        </authorList>
    </citation>
    <scope>NUCLEOTIDE SEQUENCE [MRNA]</scope>
    <scope>FUNCTION</scope>
    <scope>DEVELOPMENTAL STAGE</scope>
</reference>
<dbReference type="EMBL" id="AY648794">
    <property type="protein sequence ID" value="AAT68112.1"/>
    <property type="molecule type" value="mRNA"/>
</dbReference>
<dbReference type="EMBL" id="BC065892">
    <property type="protein sequence ID" value="AAH65892.1"/>
    <property type="molecule type" value="mRNA"/>
</dbReference>
<dbReference type="RefSeq" id="NP_998379.1">
    <property type="nucleotide sequence ID" value="NM_213214.1"/>
</dbReference>
<dbReference type="SMR" id="Q6NZZ9"/>
<dbReference type="FunCoup" id="Q6NZZ9">
    <property type="interactions" value="3090"/>
</dbReference>
<dbReference type="STRING" id="7955.ENSDARP00000004055"/>
<dbReference type="PaxDb" id="7955-ENSDARP00000004055"/>
<dbReference type="Ensembl" id="ENSDART00000003983">
    <property type="protein sequence ID" value="ENSDARP00000004055"/>
    <property type="gene ID" value="ENSDARG00000010238"/>
</dbReference>
<dbReference type="GeneID" id="406495"/>
<dbReference type="KEGG" id="dre:406495"/>
<dbReference type="AGR" id="ZFIN:ZDB-GENE-040426-2298"/>
<dbReference type="CTD" id="55696"/>
<dbReference type="ZFIN" id="ZDB-GENE-040426-2298">
    <property type="gene designation" value="rbm22"/>
</dbReference>
<dbReference type="eggNOG" id="KOG0153">
    <property type="taxonomic scope" value="Eukaryota"/>
</dbReference>
<dbReference type="HOGENOM" id="CLU_027112_3_0_1"/>
<dbReference type="InParanoid" id="Q6NZZ9"/>
<dbReference type="OMA" id="FRHEMPR"/>
<dbReference type="OrthoDB" id="10259600at2759"/>
<dbReference type="PhylomeDB" id="Q6NZZ9"/>
<dbReference type="TreeFam" id="TF314284"/>
<dbReference type="Reactome" id="R-DRE-72163">
    <property type="pathway name" value="mRNA Splicing - Major Pathway"/>
</dbReference>
<dbReference type="PRO" id="PR:Q6NZZ9"/>
<dbReference type="Proteomes" id="UP000000437">
    <property type="component" value="Chromosome 21"/>
</dbReference>
<dbReference type="Bgee" id="ENSDARG00000010238">
    <property type="expression patterns" value="Expressed in gastrula and 28 other cell types or tissues"/>
</dbReference>
<dbReference type="GO" id="GO:0005737">
    <property type="term" value="C:cytoplasm"/>
    <property type="evidence" value="ECO:0000250"/>
    <property type="project" value="UniProtKB"/>
</dbReference>
<dbReference type="GO" id="GO:0005634">
    <property type="term" value="C:nucleus"/>
    <property type="evidence" value="ECO:0000314"/>
    <property type="project" value="ZFIN"/>
</dbReference>
<dbReference type="GO" id="GO:0000974">
    <property type="term" value="C:Prp19 complex"/>
    <property type="evidence" value="ECO:0000318"/>
    <property type="project" value="GO_Central"/>
</dbReference>
<dbReference type="GO" id="GO:0071006">
    <property type="term" value="C:U2-type catalytic step 1 spliceosome"/>
    <property type="evidence" value="ECO:0000318"/>
    <property type="project" value="GO_Central"/>
</dbReference>
<dbReference type="GO" id="GO:0071007">
    <property type="term" value="C:U2-type catalytic step 2 spliceosome"/>
    <property type="evidence" value="ECO:0000318"/>
    <property type="project" value="GO_Central"/>
</dbReference>
<dbReference type="GO" id="GO:0036002">
    <property type="term" value="F:pre-mRNA binding"/>
    <property type="evidence" value="ECO:0000250"/>
    <property type="project" value="UniProtKB"/>
</dbReference>
<dbReference type="GO" id="GO:0017070">
    <property type="term" value="F:U6 snRNA binding"/>
    <property type="evidence" value="ECO:0000250"/>
    <property type="project" value="UniProtKB"/>
</dbReference>
<dbReference type="GO" id="GO:0008270">
    <property type="term" value="F:zinc ion binding"/>
    <property type="evidence" value="ECO:0007669"/>
    <property type="project" value="UniProtKB-KW"/>
</dbReference>
<dbReference type="GO" id="GO:0043009">
    <property type="term" value="P:chordate embryonic development"/>
    <property type="evidence" value="ECO:0000315"/>
    <property type="project" value="ZFIN"/>
</dbReference>
<dbReference type="GO" id="GO:0045292">
    <property type="term" value="P:mRNA cis splicing, via spliceosome"/>
    <property type="evidence" value="ECO:0000250"/>
    <property type="project" value="UniProtKB"/>
</dbReference>
<dbReference type="GO" id="GO:0033120">
    <property type="term" value="P:positive regulation of RNA splicing"/>
    <property type="evidence" value="ECO:0000250"/>
    <property type="project" value="UniProtKB"/>
</dbReference>
<dbReference type="CDD" id="cd12224">
    <property type="entry name" value="RRM_RBM22"/>
    <property type="match status" value="1"/>
</dbReference>
<dbReference type="FunFam" id="3.30.70.330:FF:000137">
    <property type="entry name" value="pre-mRNA-splicing factor RBM22"/>
    <property type="match status" value="1"/>
</dbReference>
<dbReference type="FunFam" id="4.10.1000.10:FF:000006">
    <property type="entry name" value="Putative pre-mrna-splicing factor rbm22"/>
    <property type="match status" value="1"/>
</dbReference>
<dbReference type="Gene3D" id="3.30.70.330">
    <property type="match status" value="1"/>
</dbReference>
<dbReference type="Gene3D" id="4.10.1000.10">
    <property type="entry name" value="Zinc finger, CCCH-type"/>
    <property type="match status" value="1"/>
</dbReference>
<dbReference type="InterPro" id="IPR039171">
    <property type="entry name" value="Cwc2/Slt11"/>
</dbReference>
<dbReference type="InterPro" id="IPR012677">
    <property type="entry name" value="Nucleotide-bd_a/b_plait_sf"/>
</dbReference>
<dbReference type="InterPro" id="IPR035979">
    <property type="entry name" value="RBD_domain_sf"/>
</dbReference>
<dbReference type="InterPro" id="IPR000504">
    <property type="entry name" value="RRM_dom"/>
</dbReference>
<dbReference type="InterPro" id="IPR048995">
    <property type="entry name" value="STL11/RBM22-like_N"/>
</dbReference>
<dbReference type="InterPro" id="IPR000571">
    <property type="entry name" value="Znf_CCCH"/>
</dbReference>
<dbReference type="InterPro" id="IPR036855">
    <property type="entry name" value="Znf_CCCH_sf"/>
</dbReference>
<dbReference type="PANTHER" id="PTHR14089">
    <property type="entry name" value="PRE-MRNA-SPLICING FACTOR RBM22"/>
    <property type="match status" value="1"/>
</dbReference>
<dbReference type="PANTHER" id="PTHR14089:SF6">
    <property type="entry name" value="PRE-MRNA-SPLICING FACTOR RBM22"/>
    <property type="match status" value="1"/>
</dbReference>
<dbReference type="Pfam" id="PF00076">
    <property type="entry name" value="RRM_1"/>
    <property type="match status" value="1"/>
</dbReference>
<dbReference type="Pfam" id="PF21369">
    <property type="entry name" value="STL11_N"/>
    <property type="match status" value="1"/>
</dbReference>
<dbReference type="SMART" id="SM00360">
    <property type="entry name" value="RRM"/>
    <property type="match status" value="1"/>
</dbReference>
<dbReference type="SMART" id="SM00356">
    <property type="entry name" value="ZnF_C3H1"/>
    <property type="match status" value="1"/>
</dbReference>
<dbReference type="SUPFAM" id="SSF90229">
    <property type="entry name" value="CCCH zinc finger"/>
    <property type="match status" value="1"/>
</dbReference>
<dbReference type="SUPFAM" id="SSF54928">
    <property type="entry name" value="RNA-binding domain, RBD"/>
    <property type="match status" value="1"/>
</dbReference>
<dbReference type="PROSITE" id="PS50102">
    <property type="entry name" value="RRM"/>
    <property type="match status" value="1"/>
</dbReference>
<dbReference type="PROSITE" id="PS50103">
    <property type="entry name" value="ZF_C3H1"/>
    <property type="match status" value="1"/>
</dbReference>
<protein>
    <recommendedName>
        <fullName>Pre-mRNA-splicing factor RBM22</fullName>
    </recommendedName>
    <alternativeName>
        <fullName>RNA-binding motif protein 22</fullName>
    </alternativeName>
</protein>
<accession>Q6NZZ9</accession>
<evidence type="ECO:0000250" key="1"/>
<evidence type="ECO:0000250" key="2">
    <source>
        <dbReference type="UniProtKB" id="Q9NW64"/>
    </source>
</evidence>
<evidence type="ECO:0000255" key="3">
    <source>
        <dbReference type="PROSITE-ProRule" id="PRU00176"/>
    </source>
</evidence>
<evidence type="ECO:0000255" key="4">
    <source>
        <dbReference type="PROSITE-ProRule" id="PRU00723"/>
    </source>
</evidence>
<evidence type="ECO:0000256" key="5">
    <source>
        <dbReference type="SAM" id="MobiDB-lite"/>
    </source>
</evidence>
<evidence type="ECO:0000269" key="6">
    <source>
    </source>
</evidence>
<evidence type="ECO:0000305" key="7"/>
<name>RBM22_DANRE</name>
<proteinExistence type="evidence at transcript level"/>
<gene>
    <name type="primary">rbm22</name>
    <name type="ORF">zgc:77910</name>
</gene>
<comment type="function">
    <text evidence="2 6">Required for pre-mRNA splicing as component of the activated spliceosome. Involved in the first step of pre-mRNA splicing. Binds directly to the internal stem-loop (ISL) domain of the U6 snRNA and to the pre-mRNA intron near the 5' splice site during the activation and catalytic phases of the spliceosome cycle (By similarity). Required for normal early embryogenesis (PubMed:20013661).</text>
</comment>
<comment type="subunit">
    <text evidence="2">Component of the pre-catalytic and catalytic spliceosome complexes. Component of the postcatalytic spliceosome P complex.</text>
</comment>
<comment type="subcellular location">
    <subcellularLocation>
        <location evidence="2">Nucleus</location>
    </subcellularLocation>
    <subcellularLocation>
        <location evidence="2">Cytoplasm</location>
    </subcellularLocation>
    <text evidence="2">Nearly exclusively nuclear. May be shuttling between the nucleus and the cytosol.</text>
</comment>
<comment type="developmental stage">
    <text evidence="6">Maternally expressed. Expressed as early as the 1-cell stage and continued through the 8-cell and 32-cell stages and 15-hpf and 24-hpf stages.</text>
</comment>
<comment type="domain">
    <text evidence="1">The C-terminal RRM domain and the zinc finger motif are necessary for RNA-binding.</text>
</comment>
<comment type="similarity">
    <text evidence="7">Belongs to the SLT11 family.</text>
</comment>
<organism>
    <name type="scientific">Danio rerio</name>
    <name type="common">Zebrafish</name>
    <name type="synonym">Brachydanio rerio</name>
    <dbReference type="NCBI Taxonomy" id="7955"/>
    <lineage>
        <taxon>Eukaryota</taxon>
        <taxon>Metazoa</taxon>
        <taxon>Chordata</taxon>
        <taxon>Craniata</taxon>
        <taxon>Vertebrata</taxon>
        <taxon>Euteleostomi</taxon>
        <taxon>Actinopterygii</taxon>
        <taxon>Neopterygii</taxon>
        <taxon>Teleostei</taxon>
        <taxon>Ostariophysi</taxon>
        <taxon>Cypriniformes</taxon>
        <taxon>Danionidae</taxon>
        <taxon>Danioninae</taxon>
        <taxon>Danio</taxon>
    </lineage>
</organism>